<keyword id="KW-0131">Cell cycle</keyword>
<keyword id="KW-0132">Cell division</keyword>
<keyword id="KW-0159">Chromosome partition</keyword>
<keyword id="KW-0963">Cytoplasm</keyword>
<keyword id="KW-0229">DNA integration</keyword>
<keyword id="KW-0233">DNA recombination</keyword>
<keyword id="KW-0238">DNA-binding</keyword>
<keyword id="KW-1185">Reference proteome</keyword>
<feature type="chain" id="PRO_0000095316" description="Tyrosine recombinase XerC">
    <location>
        <begin position="1"/>
        <end position="299"/>
    </location>
</feature>
<feature type="domain" description="Core-binding (CB)" evidence="3">
    <location>
        <begin position="1"/>
        <end position="85"/>
    </location>
</feature>
<feature type="domain" description="Tyr recombinase" evidence="2">
    <location>
        <begin position="106"/>
        <end position="285"/>
    </location>
</feature>
<feature type="active site" evidence="1">
    <location>
        <position position="146"/>
    </location>
</feature>
<feature type="active site" evidence="1">
    <location>
        <position position="170"/>
    </location>
</feature>
<feature type="active site" evidence="1">
    <location>
        <position position="237"/>
    </location>
</feature>
<feature type="active site" evidence="1">
    <location>
        <position position="240"/>
    </location>
</feature>
<feature type="active site" evidence="1">
    <location>
        <position position="263"/>
    </location>
</feature>
<feature type="active site" description="O-(3'-phospho-DNA)-tyrosine intermediate" evidence="1">
    <location>
        <position position="272"/>
    </location>
</feature>
<comment type="function">
    <text evidence="1">Site-specific tyrosine recombinase, which acts by catalyzing the cutting and rejoining of the recombining DNA molecules. The XerC-XerD complex is essential to convert dimers of the bacterial chromosome into monomers to permit their segregation at cell division. It also contributes to the segregational stability of plasmids.</text>
</comment>
<comment type="subunit">
    <text evidence="1">Forms a cyclic heterotetrameric complex composed of two molecules of XerC and two molecules of XerD.</text>
</comment>
<comment type="subcellular location">
    <subcellularLocation>
        <location evidence="1">Cytoplasm</location>
    </subcellularLocation>
</comment>
<comment type="similarity">
    <text evidence="1">Belongs to the 'phage' integrase family. XerC subfamily.</text>
</comment>
<protein>
    <recommendedName>
        <fullName evidence="1">Tyrosine recombinase XerC</fullName>
    </recommendedName>
</protein>
<organism>
    <name type="scientific">Pseudomonas putida (strain ATCC 47054 / DSM 6125 / CFBP 8728 / NCIMB 11950 / KT2440)</name>
    <dbReference type="NCBI Taxonomy" id="160488"/>
    <lineage>
        <taxon>Bacteria</taxon>
        <taxon>Pseudomonadati</taxon>
        <taxon>Pseudomonadota</taxon>
        <taxon>Gammaproteobacteria</taxon>
        <taxon>Pseudomonadales</taxon>
        <taxon>Pseudomonadaceae</taxon>
        <taxon>Pseudomonas</taxon>
    </lineage>
</organism>
<dbReference type="EMBL" id="AE015451">
    <property type="protein sequence ID" value="AAN70795.1"/>
    <property type="molecule type" value="Genomic_DNA"/>
</dbReference>
<dbReference type="RefSeq" id="NP_747331.1">
    <property type="nucleotide sequence ID" value="NC_002947.4"/>
</dbReference>
<dbReference type="RefSeq" id="WP_010955749.1">
    <property type="nucleotide sequence ID" value="NZ_CP169744.1"/>
</dbReference>
<dbReference type="SMR" id="Q88CF1"/>
<dbReference type="STRING" id="160488.PP_5230"/>
<dbReference type="PaxDb" id="160488-PP_5230"/>
<dbReference type="GeneID" id="83682971"/>
<dbReference type="KEGG" id="ppu:PP_5230"/>
<dbReference type="PATRIC" id="fig|160488.4.peg.5578"/>
<dbReference type="eggNOG" id="COG4973">
    <property type="taxonomic scope" value="Bacteria"/>
</dbReference>
<dbReference type="HOGENOM" id="CLU_027562_9_0_6"/>
<dbReference type="OrthoDB" id="9801717at2"/>
<dbReference type="PhylomeDB" id="Q88CF1"/>
<dbReference type="BioCyc" id="PPUT160488:G1G01-5581-MONOMER"/>
<dbReference type="Proteomes" id="UP000000556">
    <property type="component" value="Chromosome"/>
</dbReference>
<dbReference type="GO" id="GO:0005737">
    <property type="term" value="C:cytoplasm"/>
    <property type="evidence" value="ECO:0007669"/>
    <property type="project" value="UniProtKB-SubCell"/>
</dbReference>
<dbReference type="GO" id="GO:0003677">
    <property type="term" value="F:DNA binding"/>
    <property type="evidence" value="ECO:0007669"/>
    <property type="project" value="UniProtKB-KW"/>
</dbReference>
<dbReference type="GO" id="GO:0009037">
    <property type="term" value="F:tyrosine-based site-specific recombinase activity"/>
    <property type="evidence" value="ECO:0007669"/>
    <property type="project" value="UniProtKB-UniRule"/>
</dbReference>
<dbReference type="GO" id="GO:0051301">
    <property type="term" value="P:cell division"/>
    <property type="evidence" value="ECO:0007669"/>
    <property type="project" value="UniProtKB-KW"/>
</dbReference>
<dbReference type="GO" id="GO:0007059">
    <property type="term" value="P:chromosome segregation"/>
    <property type="evidence" value="ECO:0007669"/>
    <property type="project" value="UniProtKB-UniRule"/>
</dbReference>
<dbReference type="GO" id="GO:0006313">
    <property type="term" value="P:DNA transposition"/>
    <property type="evidence" value="ECO:0007669"/>
    <property type="project" value="UniProtKB-UniRule"/>
</dbReference>
<dbReference type="CDD" id="cd00798">
    <property type="entry name" value="INT_XerDC_C"/>
    <property type="match status" value="1"/>
</dbReference>
<dbReference type="Gene3D" id="1.10.150.130">
    <property type="match status" value="1"/>
</dbReference>
<dbReference type="Gene3D" id="1.10.443.10">
    <property type="entry name" value="Intergrase catalytic core"/>
    <property type="match status" value="1"/>
</dbReference>
<dbReference type="HAMAP" id="MF_01808">
    <property type="entry name" value="Recomb_XerC_XerD"/>
    <property type="match status" value="1"/>
</dbReference>
<dbReference type="InterPro" id="IPR044068">
    <property type="entry name" value="CB"/>
</dbReference>
<dbReference type="InterPro" id="IPR011010">
    <property type="entry name" value="DNA_brk_join_enz"/>
</dbReference>
<dbReference type="InterPro" id="IPR013762">
    <property type="entry name" value="Integrase-like_cat_sf"/>
</dbReference>
<dbReference type="InterPro" id="IPR002104">
    <property type="entry name" value="Integrase_catalytic"/>
</dbReference>
<dbReference type="InterPro" id="IPR010998">
    <property type="entry name" value="Integrase_recombinase_N"/>
</dbReference>
<dbReference type="InterPro" id="IPR004107">
    <property type="entry name" value="Integrase_SAM-like_N"/>
</dbReference>
<dbReference type="InterPro" id="IPR011931">
    <property type="entry name" value="Recomb_XerC"/>
</dbReference>
<dbReference type="InterPro" id="IPR023009">
    <property type="entry name" value="Tyrosine_recombinase_XerC/XerD"/>
</dbReference>
<dbReference type="InterPro" id="IPR050090">
    <property type="entry name" value="Tyrosine_recombinase_XerCD"/>
</dbReference>
<dbReference type="NCBIfam" id="NF001399">
    <property type="entry name" value="PRK00283.1"/>
    <property type="match status" value="1"/>
</dbReference>
<dbReference type="NCBIfam" id="TIGR02224">
    <property type="entry name" value="recomb_XerC"/>
    <property type="match status" value="1"/>
</dbReference>
<dbReference type="PANTHER" id="PTHR30349">
    <property type="entry name" value="PHAGE INTEGRASE-RELATED"/>
    <property type="match status" value="1"/>
</dbReference>
<dbReference type="PANTHER" id="PTHR30349:SF81">
    <property type="entry name" value="TYROSINE RECOMBINASE XERC"/>
    <property type="match status" value="1"/>
</dbReference>
<dbReference type="Pfam" id="PF02899">
    <property type="entry name" value="Phage_int_SAM_1"/>
    <property type="match status" value="1"/>
</dbReference>
<dbReference type="Pfam" id="PF00589">
    <property type="entry name" value="Phage_integrase"/>
    <property type="match status" value="1"/>
</dbReference>
<dbReference type="SUPFAM" id="SSF56349">
    <property type="entry name" value="DNA breaking-rejoining enzymes"/>
    <property type="match status" value="1"/>
</dbReference>
<dbReference type="SUPFAM" id="SSF47823">
    <property type="entry name" value="lambda integrase-like, N-terminal domain"/>
    <property type="match status" value="1"/>
</dbReference>
<dbReference type="PROSITE" id="PS51900">
    <property type="entry name" value="CB"/>
    <property type="match status" value="1"/>
</dbReference>
<dbReference type="PROSITE" id="PS51898">
    <property type="entry name" value="TYR_RECOMBINASE"/>
    <property type="match status" value="1"/>
</dbReference>
<accession>Q88CF1</accession>
<gene>
    <name evidence="1" type="primary">xerC</name>
    <name type="ordered locus">PP_5230</name>
</gene>
<name>XERC_PSEPK</name>
<evidence type="ECO:0000255" key="1">
    <source>
        <dbReference type="HAMAP-Rule" id="MF_01808"/>
    </source>
</evidence>
<evidence type="ECO:0000255" key="2">
    <source>
        <dbReference type="PROSITE-ProRule" id="PRU01246"/>
    </source>
</evidence>
<evidence type="ECO:0000255" key="3">
    <source>
        <dbReference type="PROSITE-ProRule" id="PRU01248"/>
    </source>
</evidence>
<proteinExistence type="inferred from homology"/>
<sequence>MKRQLEAYCAHLRNERQVSEHTSQGYRRDLEKVIAYCEEHGIADWQALQIQQLRQLIARLHHHGQSPRSLARLLSAVRGLYRYLNREGLCQHDPANGLSAPKGERRLPKVLDTDRALQLLDGGVDDDFIARRDQAILELFYSSGLRLSELTNLDLDHLDLAAGLVQVLGKGGKARVLPVGRKAREALQAWYRLRGIGNPRDRAVFITRQGNRISPRAVRLRVKVAGERELGQHLHPHMLRHSFASHVLESSQDLRAVQEMLGHADISTTQIYTHLDFQHLAAVYDSAHPRAKRSKGTDS</sequence>
<reference key="1">
    <citation type="journal article" date="2002" name="Environ. Microbiol.">
        <title>Complete genome sequence and comparative analysis of the metabolically versatile Pseudomonas putida KT2440.</title>
        <authorList>
            <person name="Nelson K.E."/>
            <person name="Weinel C."/>
            <person name="Paulsen I.T."/>
            <person name="Dodson R.J."/>
            <person name="Hilbert H."/>
            <person name="Martins dos Santos V.A.P."/>
            <person name="Fouts D.E."/>
            <person name="Gill S.R."/>
            <person name="Pop M."/>
            <person name="Holmes M."/>
            <person name="Brinkac L.M."/>
            <person name="Beanan M.J."/>
            <person name="DeBoy R.T."/>
            <person name="Daugherty S.C."/>
            <person name="Kolonay J.F."/>
            <person name="Madupu R."/>
            <person name="Nelson W.C."/>
            <person name="White O."/>
            <person name="Peterson J.D."/>
            <person name="Khouri H.M."/>
            <person name="Hance I."/>
            <person name="Chris Lee P."/>
            <person name="Holtzapple E.K."/>
            <person name="Scanlan D."/>
            <person name="Tran K."/>
            <person name="Moazzez A."/>
            <person name="Utterback T.R."/>
            <person name="Rizzo M."/>
            <person name="Lee K."/>
            <person name="Kosack D."/>
            <person name="Moestl D."/>
            <person name="Wedler H."/>
            <person name="Lauber J."/>
            <person name="Stjepandic D."/>
            <person name="Hoheisel J."/>
            <person name="Straetz M."/>
            <person name="Heim S."/>
            <person name="Kiewitz C."/>
            <person name="Eisen J.A."/>
            <person name="Timmis K.N."/>
            <person name="Duesterhoeft A."/>
            <person name="Tuemmler B."/>
            <person name="Fraser C.M."/>
        </authorList>
    </citation>
    <scope>NUCLEOTIDE SEQUENCE [LARGE SCALE GENOMIC DNA]</scope>
    <source>
        <strain>ATCC 47054 / DSM 6125 / CFBP 8728 / NCIMB 11950 / KT2440</strain>
    </source>
</reference>